<proteinExistence type="inferred from homology"/>
<evidence type="ECO:0000255" key="1">
    <source>
        <dbReference type="HAMAP-Rule" id="MF_01395"/>
    </source>
</evidence>
<evidence type="ECO:0000255" key="2">
    <source>
        <dbReference type="PROSITE-ProRule" id="PRU01136"/>
    </source>
</evidence>
<gene>
    <name evidence="1" type="primary">accD</name>
    <name type="ordered locus">PBPRA2652</name>
</gene>
<dbReference type="EC" id="2.1.3.15" evidence="1"/>
<dbReference type="EMBL" id="CR378671">
    <property type="protein sequence ID" value="CAG21030.1"/>
    <property type="molecule type" value="Genomic_DNA"/>
</dbReference>
<dbReference type="RefSeq" id="WP_011219309.1">
    <property type="nucleotide sequence ID" value="NC_006370.1"/>
</dbReference>
<dbReference type="SMR" id="Q6LNU6"/>
<dbReference type="STRING" id="298386.PBPRA2652"/>
<dbReference type="KEGG" id="ppr:PBPRA2652"/>
<dbReference type="eggNOG" id="COG0777">
    <property type="taxonomic scope" value="Bacteria"/>
</dbReference>
<dbReference type="HOGENOM" id="CLU_015486_1_3_6"/>
<dbReference type="UniPathway" id="UPA00655">
    <property type="reaction ID" value="UER00711"/>
</dbReference>
<dbReference type="Proteomes" id="UP000000593">
    <property type="component" value="Chromosome 1"/>
</dbReference>
<dbReference type="GO" id="GO:0009329">
    <property type="term" value="C:acetate CoA-transferase complex"/>
    <property type="evidence" value="ECO:0007669"/>
    <property type="project" value="TreeGrafter"/>
</dbReference>
<dbReference type="GO" id="GO:0003989">
    <property type="term" value="F:acetyl-CoA carboxylase activity"/>
    <property type="evidence" value="ECO:0007669"/>
    <property type="project" value="InterPro"/>
</dbReference>
<dbReference type="GO" id="GO:0005524">
    <property type="term" value="F:ATP binding"/>
    <property type="evidence" value="ECO:0007669"/>
    <property type="project" value="UniProtKB-KW"/>
</dbReference>
<dbReference type="GO" id="GO:0016743">
    <property type="term" value="F:carboxyl- or carbamoyltransferase activity"/>
    <property type="evidence" value="ECO:0007669"/>
    <property type="project" value="UniProtKB-UniRule"/>
</dbReference>
<dbReference type="GO" id="GO:0008270">
    <property type="term" value="F:zinc ion binding"/>
    <property type="evidence" value="ECO:0007669"/>
    <property type="project" value="UniProtKB-UniRule"/>
</dbReference>
<dbReference type="GO" id="GO:0006633">
    <property type="term" value="P:fatty acid biosynthetic process"/>
    <property type="evidence" value="ECO:0007669"/>
    <property type="project" value="UniProtKB-KW"/>
</dbReference>
<dbReference type="GO" id="GO:2001295">
    <property type="term" value="P:malonyl-CoA biosynthetic process"/>
    <property type="evidence" value="ECO:0007669"/>
    <property type="project" value="UniProtKB-UniRule"/>
</dbReference>
<dbReference type="Gene3D" id="3.90.226.10">
    <property type="entry name" value="2-enoyl-CoA Hydratase, Chain A, domain 1"/>
    <property type="match status" value="1"/>
</dbReference>
<dbReference type="HAMAP" id="MF_01395">
    <property type="entry name" value="AcetylCoA_CT_beta"/>
    <property type="match status" value="1"/>
</dbReference>
<dbReference type="InterPro" id="IPR034733">
    <property type="entry name" value="AcCoA_carboxyl_beta"/>
</dbReference>
<dbReference type="InterPro" id="IPR000438">
    <property type="entry name" value="Acetyl_CoA_COase_Trfase_b_su"/>
</dbReference>
<dbReference type="InterPro" id="IPR029045">
    <property type="entry name" value="ClpP/crotonase-like_dom_sf"/>
</dbReference>
<dbReference type="InterPro" id="IPR011762">
    <property type="entry name" value="COA_CT_N"/>
</dbReference>
<dbReference type="InterPro" id="IPR041010">
    <property type="entry name" value="Znf-ACC"/>
</dbReference>
<dbReference type="NCBIfam" id="TIGR00515">
    <property type="entry name" value="accD"/>
    <property type="match status" value="1"/>
</dbReference>
<dbReference type="PANTHER" id="PTHR42995">
    <property type="entry name" value="ACETYL-COENZYME A CARBOXYLASE CARBOXYL TRANSFERASE SUBUNIT BETA, CHLOROPLASTIC"/>
    <property type="match status" value="1"/>
</dbReference>
<dbReference type="PANTHER" id="PTHR42995:SF5">
    <property type="entry name" value="ACETYL-COENZYME A CARBOXYLASE CARBOXYL TRANSFERASE SUBUNIT BETA, CHLOROPLASTIC"/>
    <property type="match status" value="1"/>
</dbReference>
<dbReference type="Pfam" id="PF01039">
    <property type="entry name" value="Carboxyl_trans"/>
    <property type="match status" value="1"/>
</dbReference>
<dbReference type="Pfam" id="PF17848">
    <property type="entry name" value="Zn_ribbon_ACC"/>
    <property type="match status" value="1"/>
</dbReference>
<dbReference type="PRINTS" id="PR01070">
    <property type="entry name" value="ACCCTRFRASEB"/>
</dbReference>
<dbReference type="SUPFAM" id="SSF52096">
    <property type="entry name" value="ClpP/crotonase"/>
    <property type="match status" value="1"/>
</dbReference>
<dbReference type="PROSITE" id="PS50980">
    <property type="entry name" value="COA_CT_NTER"/>
    <property type="match status" value="1"/>
</dbReference>
<accession>Q6LNU6</accession>
<sequence length="307" mass="33866">MSWLEKILTKSNIVSSRKVSIPEGVWTKCTSCEQVLYHADLERNLEVCPKCDHHMRMKARRRLETFLDTDSQVELAADLEPKDMLKFRDSKKYKDRISAAQKSSGEKDALIVMKGTLLEQPIVACAFEFSFMGGSMGSVVGAKFVRAVNEALESNCALVCFSASGGARMQEALMSLMQMAKTSAALQRLSAKGLPFISVLTDPTMGGVSASLAMLGDINIGEPKALIGFAGQRVIEQTVREKLPEGFQRSEFLLEHGAIDMIVNRREMRQRIGGLVAKMTNHSSPLVVPIEQPKLEESAPEQTPEQE</sequence>
<reference key="1">
    <citation type="journal article" date="2005" name="Science">
        <title>Life at depth: Photobacterium profundum genome sequence and expression analysis.</title>
        <authorList>
            <person name="Vezzi A."/>
            <person name="Campanaro S."/>
            <person name="D'Angelo M."/>
            <person name="Simonato F."/>
            <person name="Vitulo N."/>
            <person name="Lauro F.M."/>
            <person name="Cestaro A."/>
            <person name="Malacrida G."/>
            <person name="Simionati B."/>
            <person name="Cannata N."/>
            <person name="Romualdi C."/>
            <person name="Bartlett D.H."/>
            <person name="Valle G."/>
        </authorList>
    </citation>
    <scope>NUCLEOTIDE SEQUENCE [LARGE SCALE GENOMIC DNA]</scope>
    <source>
        <strain>ATCC BAA-1253 / SS9</strain>
    </source>
</reference>
<organism>
    <name type="scientific">Photobacterium profundum (strain SS9)</name>
    <dbReference type="NCBI Taxonomy" id="298386"/>
    <lineage>
        <taxon>Bacteria</taxon>
        <taxon>Pseudomonadati</taxon>
        <taxon>Pseudomonadota</taxon>
        <taxon>Gammaproteobacteria</taxon>
        <taxon>Vibrionales</taxon>
        <taxon>Vibrionaceae</taxon>
        <taxon>Photobacterium</taxon>
    </lineage>
</organism>
<feature type="chain" id="PRO_0000359015" description="Acetyl-coenzyme A carboxylase carboxyl transferase subunit beta">
    <location>
        <begin position="1"/>
        <end position="307"/>
    </location>
</feature>
<feature type="domain" description="CoA carboxyltransferase N-terminal" evidence="2">
    <location>
        <begin position="25"/>
        <end position="294"/>
    </location>
</feature>
<feature type="zinc finger region" description="C4-type" evidence="1">
    <location>
        <begin position="29"/>
        <end position="51"/>
    </location>
</feature>
<feature type="binding site" evidence="1">
    <location>
        <position position="29"/>
    </location>
    <ligand>
        <name>Zn(2+)</name>
        <dbReference type="ChEBI" id="CHEBI:29105"/>
    </ligand>
</feature>
<feature type="binding site" evidence="1">
    <location>
        <position position="32"/>
    </location>
    <ligand>
        <name>Zn(2+)</name>
        <dbReference type="ChEBI" id="CHEBI:29105"/>
    </ligand>
</feature>
<feature type="binding site" evidence="1">
    <location>
        <position position="48"/>
    </location>
    <ligand>
        <name>Zn(2+)</name>
        <dbReference type="ChEBI" id="CHEBI:29105"/>
    </ligand>
</feature>
<feature type="binding site" evidence="1">
    <location>
        <position position="51"/>
    </location>
    <ligand>
        <name>Zn(2+)</name>
        <dbReference type="ChEBI" id="CHEBI:29105"/>
    </ligand>
</feature>
<protein>
    <recommendedName>
        <fullName evidence="1">Acetyl-coenzyme A carboxylase carboxyl transferase subunit beta</fullName>
        <shortName evidence="1">ACCase subunit beta</shortName>
        <shortName evidence="1">Acetyl-CoA carboxylase carboxyltransferase subunit beta</shortName>
        <ecNumber evidence="1">2.1.3.15</ecNumber>
    </recommendedName>
</protein>
<name>ACCD_PHOPR</name>
<keyword id="KW-0067">ATP-binding</keyword>
<keyword id="KW-0963">Cytoplasm</keyword>
<keyword id="KW-0275">Fatty acid biosynthesis</keyword>
<keyword id="KW-0276">Fatty acid metabolism</keyword>
<keyword id="KW-0444">Lipid biosynthesis</keyword>
<keyword id="KW-0443">Lipid metabolism</keyword>
<keyword id="KW-0479">Metal-binding</keyword>
<keyword id="KW-0547">Nucleotide-binding</keyword>
<keyword id="KW-1185">Reference proteome</keyword>
<keyword id="KW-0808">Transferase</keyword>
<keyword id="KW-0862">Zinc</keyword>
<keyword id="KW-0863">Zinc-finger</keyword>
<comment type="function">
    <text evidence="1">Component of the acetyl coenzyme A carboxylase (ACC) complex. Biotin carboxylase (BC) catalyzes the carboxylation of biotin on its carrier protein (BCCP) and then the CO(2) group is transferred by the transcarboxylase to acetyl-CoA to form malonyl-CoA.</text>
</comment>
<comment type="catalytic activity">
    <reaction evidence="1">
        <text>N(6)-carboxybiotinyl-L-lysyl-[protein] + acetyl-CoA = N(6)-biotinyl-L-lysyl-[protein] + malonyl-CoA</text>
        <dbReference type="Rhea" id="RHEA:54728"/>
        <dbReference type="Rhea" id="RHEA-COMP:10505"/>
        <dbReference type="Rhea" id="RHEA-COMP:10506"/>
        <dbReference type="ChEBI" id="CHEBI:57288"/>
        <dbReference type="ChEBI" id="CHEBI:57384"/>
        <dbReference type="ChEBI" id="CHEBI:83144"/>
        <dbReference type="ChEBI" id="CHEBI:83145"/>
        <dbReference type="EC" id="2.1.3.15"/>
    </reaction>
</comment>
<comment type="cofactor">
    <cofactor evidence="1">
        <name>Zn(2+)</name>
        <dbReference type="ChEBI" id="CHEBI:29105"/>
    </cofactor>
    <text evidence="1">Binds 1 zinc ion per subunit.</text>
</comment>
<comment type="pathway">
    <text evidence="1">Lipid metabolism; malonyl-CoA biosynthesis; malonyl-CoA from acetyl-CoA: step 1/1.</text>
</comment>
<comment type="subunit">
    <text evidence="1">Acetyl-CoA carboxylase is a heterohexamer composed of biotin carboxyl carrier protein (AccB), biotin carboxylase (AccC) and two subunits each of ACCase subunit alpha (AccA) and ACCase subunit beta (AccD).</text>
</comment>
<comment type="subcellular location">
    <subcellularLocation>
        <location evidence="1">Cytoplasm</location>
    </subcellularLocation>
</comment>
<comment type="similarity">
    <text evidence="1">Belongs to the AccD/PCCB family.</text>
</comment>